<gene>
    <name evidence="1" type="primary">lpxA</name>
    <name type="ordered locus">SNSL254_A0250</name>
</gene>
<keyword id="KW-0012">Acyltransferase</keyword>
<keyword id="KW-0963">Cytoplasm</keyword>
<keyword id="KW-0441">Lipid A biosynthesis</keyword>
<keyword id="KW-0444">Lipid biosynthesis</keyword>
<keyword id="KW-0443">Lipid metabolism</keyword>
<keyword id="KW-0677">Repeat</keyword>
<keyword id="KW-0808">Transferase</keyword>
<organism>
    <name type="scientific">Salmonella newport (strain SL254)</name>
    <dbReference type="NCBI Taxonomy" id="423368"/>
    <lineage>
        <taxon>Bacteria</taxon>
        <taxon>Pseudomonadati</taxon>
        <taxon>Pseudomonadota</taxon>
        <taxon>Gammaproteobacteria</taxon>
        <taxon>Enterobacterales</taxon>
        <taxon>Enterobacteriaceae</taxon>
        <taxon>Salmonella</taxon>
    </lineage>
</organism>
<reference key="1">
    <citation type="journal article" date="2011" name="J. Bacteriol.">
        <title>Comparative genomics of 28 Salmonella enterica isolates: evidence for CRISPR-mediated adaptive sublineage evolution.</title>
        <authorList>
            <person name="Fricke W.F."/>
            <person name="Mammel M.K."/>
            <person name="McDermott P.F."/>
            <person name="Tartera C."/>
            <person name="White D.G."/>
            <person name="Leclerc J.E."/>
            <person name="Ravel J."/>
            <person name="Cebula T.A."/>
        </authorList>
    </citation>
    <scope>NUCLEOTIDE SEQUENCE [LARGE SCALE GENOMIC DNA]</scope>
    <source>
        <strain>SL254</strain>
    </source>
</reference>
<sequence>MIDKSAFIHPTAIVEDGAVIGANAHIGPFCIVGPQVEIGEGTVLKSHVVVNGQTKIGRDNEIYQFASIGEVNQDLKYAGEPTRVEIGDRNRIRESVTIHRGTVQGGGLTKVGSDNLLMINAHVAHDCTVGNRCILANNATLAGHVSVDDFAIIGGMTAVHQFCIIGAHVMVGGCSGVAQDVPPYVIAQGNHATPFGVNIEGLKRRGFSREGLVAIRNAYKLLYRSGKTLDEAKLEIAELAEKHPEVKAFTEFFERSTRGPIR</sequence>
<protein>
    <recommendedName>
        <fullName evidence="1">Acyl-[acyl-carrier-protein]--UDP-N-acetylglucosamine O-acyltransferase</fullName>
        <shortName evidence="1">UDP-N-acetylglucosamine acyltransferase</shortName>
        <ecNumber evidence="1">2.3.1.129</ecNumber>
    </recommendedName>
</protein>
<evidence type="ECO:0000255" key="1">
    <source>
        <dbReference type="HAMAP-Rule" id="MF_00387"/>
    </source>
</evidence>
<comment type="function">
    <text evidence="1">Involved in the biosynthesis of lipid A, a phosphorylated glycolipid that anchors the lipopolysaccharide to the outer membrane of the cell.</text>
</comment>
<comment type="catalytic activity">
    <reaction evidence="1">
        <text>a (3R)-hydroxyacyl-[ACP] + UDP-N-acetyl-alpha-D-glucosamine = a UDP-3-O-[(3R)-3-hydroxyacyl]-N-acetyl-alpha-D-glucosamine + holo-[ACP]</text>
        <dbReference type="Rhea" id="RHEA:67812"/>
        <dbReference type="Rhea" id="RHEA-COMP:9685"/>
        <dbReference type="Rhea" id="RHEA-COMP:9945"/>
        <dbReference type="ChEBI" id="CHEBI:57705"/>
        <dbReference type="ChEBI" id="CHEBI:64479"/>
        <dbReference type="ChEBI" id="CHEBI:78827"/>
        <dbReference type="ChEBI" id="CHEBI:173225"/>
        <dbReference type="EC" id="2.3.1.129"/>
    </reaction>
</comment>
<comment type="pathway">
    <text evidence="1">Glycolipid biosynthesis; lipid IV(A) biosynthesis; lipid IV(A) from (3R)-3-hydroxytetradecanoyl-[acyl-carrier-protein] and UDP-N-acetyl-alpha-D-glucosamine: step 1/6.</text>
</comment>
<comment type="subunit">
    <text evidence="1">Homotrimer.</text>
</comment>
<comment type="subcellular location">
    <subcellularLocation>
        <location evidence="1">Cytoplasm</location>
    </subcellularLocation>
</comment>
<comment type="similarity">
    <text evidence="1">Belongs to the transferase hexapeptide repeat family. LpxA subfamily.</text>
</comment>
<proteinExistence type="inferred from homology"/>
<feature type="chain" id="PRO_1000122730" description="Acyl-[acyl-carrier-protein]--UDP-N-acetylglucosamine O-acyltransferase">
    <location>
        <begin position="1"/>
        <end position="262"/>
    </location>
</feature>
<dbReference type="EC" id="2.3.1.129" evidence="1"/>
<dbReference type="EMBL" id="CP001113">
    <property type="protein sequence ID" value="ACF64624.1"/>
    <property type="molecule type" value="Genomic_DNA"/>
</dbReference>
<dbReference type="RefSeq" id="WP_000565950.1">
    <property type="nucleotide sequence ID" value="NZ_CCMR01000003.1"/>
</dbReference>
<dbReference type="SMR" id="B4SV10"/>
<dbReference type="KEGG" id="see:SNSL254_A0250"/>
<dbReference type="HOGENOM" id="CLU_061249_0_0_6"/>
<dbReference type="UniPathway" id="UPA00359">
    <property type="reaction ID" value="UER00477"/>
</dbReference>
<dbReference type="Proteomes" id="UP000008824">
    <property type="component" value="Chromosome"/>
</dbReference>
<dbReference type="GO" id="GO:0005737">
    <property type="term" value="C:cytoplasm"/>
    <property type="evidence" value="ECO:0007669"/>
    <property type="project" value="UniProtKB-SubCell"/>
</dbReference>
<dbReference type="GO" id="GO:0016020">
    <property type="term" value="C:membrane"/>
    <property type="evidence" value="ECO:0007669"/>
    <property type="project" value="GOC"/>
</dbReference>
<dbReference type="GO" id="GO:0008780">
    <property type="term" value="F:acyl-[acyl-carrier-protein]-UDP-N-acetylglucosamine O-acyltransferase activity"/>
    <property type="evidence" value="ECO:0007669"/>
    <property type="project" value="UniProtKB-UniRule"/>
</dbReference>
<dbReference type="GO" id="GO:0009245">
    <property type="term" value="P:lipid A biosynthetic process"/>
    <property type="evidence" value="ECO:0007669"/>
    <property type="project" value="UniProtKB-UniRule"/>
</dbReference>
<dbReference type="CDD" id="cd03351">
    <property type="entry name" value="LbH_UDP-GlcNAc_AT"/>
    <property type="match status" value="1"/>
</dbReference>
<dbReference type="FunFam" id="2.160.10.10:FF:000003">
    <property type="entry name" value="Acyl-[acyl-carrier-protein]--UDP-N-acetylglucosamine O-acyltransferase"/>
    <property type="match status" value="1"/>
</dbReference>
<dbReference type="Gene3D" id="2.160.10.10">
    <property type="entry name" value="Hexapeptide repeat proteins"/>
    <property type="match status" value="1"/>
</dbReference>
<dbReference type="Gene3D" id="1.20.1180.10">
    <property type="entry name" value="Udp N-acetylglucosamine O-acyltransferase, C-terminal domain"/>
    <property type="match status" value="1"/>
</dbReference>
<dbReference type="HAMAP" id="MF_00387">
    <property type="entry name" value="LpxA"/>
    <property type="match status" value="1"/>
</dbReference>
<dbReference type="InterPro" id="IPR029098">
    <property type="entry name" value="Acetyltransf_C"/>
</dbReference>
<dbReference type="InterPro" id="IPR037157">
    <property type="entry name" value="Acetyltransf_C_sf"/>
</dbReference>
<dbReference type="InterPro" id="IPR001451">
    <property type="entry name" value="Hexapep"/>
</dbReference>
<dbReference type="InterPro" id="IPR018357">
    <property type="entry name" value="Hexapep_transf_CS"/>
</dbReference>
<dbReference type="InterPro" id="IPR010137">
    <property type="entry name" value="Lipid_A_LpxA"/>
</dbReference>
<dbReference type="InterPro" id="IPR011004">
    <property type="entry name" value="Trimer_LpxA-like_sf"/>
</dbReference>
<dbReference type="NCBIfam" id="TIGR01852">
    <property type="entry name" value="lipid_A_lpxA"/>
    <property type="match status" value="1"/>
</dbReference>
<dbReference type="NCBIfam" id="NF003657">
    <property type="entry name" value="PRK05289.1"/>
    <property type="match status" value="1"/>
</dbReference>
<dbReference type="PANTHER" id="PTHR43480">
    <property type="entry name" value="ACYL-[ACYL-CARRIER-PROTEIN]--UDP-N-ACETYLGLUCOSAMINE O-ACYLTRANSFERASE"/>
    <property type="match status" value="1"/>
</dbReference>
<dbReference type="PANTHER" id="PTHR43480:SF1">
    <property type="entry name" value="ACYL-[ACYL-CARRIER-PROTEIN]--UDP-N-ACETYLGLUCOSAMINE O-ACYLTRANSFERASE, MITOCHONDRIAL-RELATED"/>
    <property type="match status" value="1"/>
</dbReference>
<dbReference type="Pfam" id="PF13720">
    <property type="entry name" value="Acetyltransf_11"/>
    <property type="match status" value="1"/>
</dbReference>
<dbReference type="Pfam" id="PF00132">
    <property type="entry name" value="Hexapep"/>
    <property type="match status" value="2"/>
</dbReference>
<dbReference type="PIRSF" id="PIRSF000456">
    <property type="entry name" value="UDP-GlcNAc_acltr"/>
    <property type="match status" value="1"/>
</dbReference>
<dbReference type="SUPFAM" id="SSF51161">
    <property type="entry name" value="Trimeric LpxA-like enzymes"/>
    <property type="match status" value="1"/>
</dbReference>
<dbReference type="PROSITE" id="PS00101">
    <property type="entry name" value="HEXAPEP_TRANSFERASES"/>
    <property type="match status" value="2"/>
</dbReference>
<name>LPXA_SALNS</name>
<accession>B4SV10</accession>